<evidence type="ECO:0000255" key="1">
    <source>
        <dbReference type="HAMAP-Rule" id="MF_00397"/>
    </source>
</evidence>
<feature type="chain" id="PRO_1000189586" description="2-(5''-triphosphoribosyl)-3'-dephosphocoenzyme-A synthase">
    <location>
        <begin position="1"/>
        <end position="292"/>
    </location>
</feature>
<proteinExistence type="inferred from homology"/>
<gene>
    <name evidence="1" type="primary">citG</name>
    <name type="ordered locus">E2348C_0514</name>
</gene>
<comment type="function">
    <text evidence="1">Catalyzes the formation of 2-(5''-triphosphoribosyl)-3'-dephosphocoenzyme-A, the precursor of the prosthetic group of the holo-acyl carrier protein (gamma chain) of citrate lyase, from ATP and dephospho-CoA.</text>
</comment>
<comment type="catalytic activity">
    <reaction evidence="1">
        <text>3'-dephospho-CoA + ATP = 2'-(5''-triphospho-alpha-D-ribosyl)-3'-dephospho-CoA + adenine</text>
        <dbReference type="Rhea" id="RHEA:15117"/>
        <dbReference type="ChEBI" id="CHEBI:16708"/>
        <dbReference type="ChEBI" id="CHEBI:30616"/>
        <dbReference type="ChEBI" id="CHEBI:57328"/>
        <dbReference type="ChEBI" id="CHEBI:61378"/>
        <dbReference type="EC" id="2.4.2.52"/>
    </reaction>
</comment>
<comment type="similarity">
    <text evidence="1">Belongs to the CitG/MdcB family.</text>
</comment>
<protein>
    <recommendedName>
        <fullName evidence="1">2-(5''-triphosphoribosyl)-3'-dephosphocoenzyme-A synthase</fullName>
        <shortName evidence="1">2-(5''-triphosphoribosyl)-3'-dephospho-CoA synthase</shortName>
        <ecNumber evidence="1">2.4.2.52</ecNumber>
    </recommendedName>
</protein>
<reference key="1">
    <citation type="journal article" date="2009" name="J. Bacteriol.">
        <title>Complete genome sequence and comparative genome analysis of enteropathogenic Escherichia coli O127:H6 strain E2348/69.</title>
        <authorList>
            <person name="Iguchi A."/>
            <person name="Thomson N.R."/>
            <person name="Ogura Y."/>
            <person name="Saunders D."/>
            <person name="Ooka T."/>
            <person name="Henderson I.R."/>
            <person name="Harris D."/>
            <person name="Asadulghani M."/>
            <person name="Kurokawa K."/>
            <person name="Dean P."/>
            <person name="Kenny B."/>
            <person name="Quail M.A."/>
            <person name="Thurston S."/>
            <person name="Dougan G."/>
            <person name="Hayashi T."/>
            <person name="Parkhill J."/>
            <person name="Frankel G."/>
        </authorList>
    </citation>
    <scope>NUCLEOTIDE SEQUENCE [LARGE SCALE GENOMIC DNA]</scope>
    <source>
        <strain>E2348/69 / EPEC</strain>
    </source>
</reference>
<sequence>MSMPATSTKTTKLATSLIDEYALLGWRAMLTEVNLSPKPGLVDRINCGAHKDMALEDFHRSALAIQGWLPRFIEFGACSAEMAPEAVLNGLRPIGMACEGDMFRATAGVNTHKGSIFSLGLLCAAIGRLLQLNQPVTPTTVCSTAASFCRGLTDRELRTNNSRLTAGQRLYQQLGLTGARGEAEAGYPLVINHALPHYLTLLDQGLDPELALLDTLLLLMATNGDTNVASRGGEGGLRWLQREAQTLLQKGGIRTPADLDYLRQFDRECIERNLSPGGSADLLILTWFLAQI</sequence>
<organism>
    <name type="scientific">Escherichia coli O127:H6 (strain E2348/69 / EPEC)</name>
    <dbReference type="NCBI Taxonomy" id="574521"/>
    <lineage>
        <taxon>Bacteria</taxon>
        <taxon>Pseudomonadati</taxon>
        <taxon>Pseudomonadota</taxon>
        <taxon>Gammaproteobacteria</taxon>
        <taxon>Enterobacterales</taxon>
        <taxon>Enterobacteriaceae</taxon>
        <taxon>Escherichia</taxon>
    </lineage>
</organism>
<keyword id="KW-0067">ATP-binding</keyword>
<keyword id="KW-0547">Nucleotide-binding</keyword>
<keyword id="KW-1185">Reference proteome</keyword>
<keyword id="KW-0808">Transferase</keyword>
<dbReference type="EC" id="2.4.2.52" evidence="1"/>
<dbReference type="EMBL" id="FM180568">
    <property type="protein sequence ID" value="CAS08062.1"/>
    <property type="molecule type" value="Genomic_DNA"/>
</dbReference>
<dbReference type="RefSeq" id="WP_000062476.1">
    <property type="nucleotide sequence ID" value="NC_011601.1"/>
</dbReference>
<dbReference type="KEGG" id="ecg:E2348C_0514"/>
<dbReference type="HOGENOM" id="CLU_056179_1_0_6"/>
<dbReference type="Proteomes" id="UP000008205">
    <property type="component" value="Chromosome"/>
</dbReference>
<dbReference type="GO" id="GO:0005524">
    <property type="term" value="F:ATP binding"/>
    <property type="evidence" value="ECO:0007669"/>
    <property type="project" value="UniProtKB-KW"/>
</dbReference>
<dbReference type="GO" id="GO:0046917">
    <property type="term" value="F:triphosphoribosyl-dephospho-CoA synthase activity"/>
    <property type="evidence" value="ECO:0007669"/>
    <property type="project" value="UniProtKB-UniRule"/>
</dbReference>
<dbReference type="GO" id="GO:0051191">
    <property type="term" value="P:prosthetic group biosynthetic process"/>
    <property type="evidence" value="ECO:0007669"/>
    <property type="project" value="TreeGrafter"/>
</dbReference>
<dbReference type="FunFam" id="1.10.4200.10:FF:000001">
    <property type="entry name" value="Triphosphoribosyl-dephospho-CoA synthase CitG"/>
    <property type="match status" value="1"/>
</dbReference>
<dbReference type="Gene3D" id="1.10.4200.10">
    <property type="entry name" value="Triphosphoribosyl-dephospho-CoA protein"/>
    <property type="match status" value="1"/>
</dbReference>
<dbReference type="HAMAP" id="MF_00397">
    <property type="entry name" value="CitG"/>
    <property type="match status" value="1"/>
</dbReference>
<dbReference type="InterPro" id="IPR002736">
    <property type="entry name" value="CitG"/>
</dbReference>
<dbReference type="InterPro" id="IPR017551">
    <property type="entry name" value="TriPribosyl-deP-CoA_syn_CitG"/>
</dbReference>
<dbReference type="NCBIfam" id="TIGR03125">
    <property type="entry name" value="citrate_citG"/>
    <property type="match status" value="1"/>
</dbReference>
<dbReference type="NCBIfam" id="NF007503">
    <property type="entry name" value="PRK10096.1"/>
    <property type="match status" value="1"/>
</dbReference>
<dbReference type="PANTHER" id="PTHR30201:SF2">
    <property type="entry name" value="2-(5''-TRIPHOSPHORIBOSYL)-3'-DEPHOSPHOCOENZYME-A SYNTHASE"/>
    <property type="match status" value="1"/>
</dbReference>
<dbReference type="PANTHER" id="PTHR30201">
    <property type="entry name" value="TRIPHOSPHORIBOSYL-DEPHOSPHO-COA SYNTHASE"/>
    <property type="match status" value="1"/>
</dbReference>
<dbReference type="Pfam" id="PF01874">
    <property type="entry name" value="CitG"/>
    <property type="match status" value="1"/>
</dbReference>
<accession>B7UKQ5</accession>
<name>CITG_ECO27</name>